<reference key="1">
    <citation type="journal article" date="2004" name="Nucleic Acids Res.">
        <title>Comparative analysis of the Borrelia garinii genome.</title>
        <authorList>
            <person name="Gloeckner G."/>
            <person name="Lehmann R."/>
            <person name="Romualdi A."/>
            <person name="Pradella S."/>
            <person name="Schulte-Spechtel U."/>
            <person name="Schilhabel M."/>
            <person name="Wilske B."/>
            <person name="Suehnel J."/>
            <person name="Platzer M."/>
        </authorList>
    </citation>
    <scope>NUCLEOTIDE SEQUENCE [LARGE SCALE GENOMIC DNA]</scope>
    <source>
        <strain>ATCC BAA-2496 / DSM 23469 / PBi</strain>
    </source>
</reference>
<name>MURE_BORGP</name>
<accession>Q662G3</accession>
<feature type="chain" id="PRO_1000012342" description="UDP-N-acetylmuramyl-tripeptide synthetase">
    <location>
        <begin position="1"/>
        <end position="508"/>
    </location>
</feature>
<feature type="binding site" evidence="1">
    <location>
        <position position="35"/>
    </location>
    <ligand>
        <name>UDP-N-acetyl-alpha-D-muramoyl-L-alanyl-D-glutamate</name>
        <dbReference type="ChEBI" id="CHEBI:83900"/>
    </ligand>
</feature>
<feature type="binding site" evidence="1">
    <location>
        <begin position="118"/>
        <end position="124"/>
    </location>
    <ligand>
        <name>ATP</name>
        <dbReference type="ChEBI" id="CHEBI:30616"/>
    </ligand>
</feature>
<feature type="binding site" evidence="1">
    <location>
        <begin position="163"/>
        <end position="164"/>
    </location>
    <ligand>
        <name>UDP-N-acetyl-alpha-D-muramoyl-L-alanyl-D-glutamate</name>
        <dbReference type="ChEBI" id="CHEBI:83900"/>
    </ligand>
</feature>
<feature type="binding site" evidence="1">
    <location>
        <position position="190"/>
    </location>
    <ligand>
        <name>UDP-N-acetyl-alpha-D-muramoyl-L-alanyl-D-glutamate</name>
        <dbReference type="ChEBI" id="CHEBI:83900"/>
    </ligand>
</feature>
<feature type="binding site" evidence="1">
    <location>
        <position position="200"/>
    </location>
    <ligand>
        <name>UDP-N-acetyl-alpha-D-muramoyl-L-alanyl-D-glutamate</name>
        <dbReference type="ChEBI" id="CHEBI:83900"/>
    </ligand>
</feature>
<feature type="modified residue" description="N6-carboxylysine" evidence="1">
    <location>
        <position position="232"/>
    </location>
</feature>
<gene>
    <name evidence="1" type="primary">murE</name>
    <name type="ordered locus">BG0200</name>
</gene>
<comment type="function">
    <text evidence="1">Catalyzes the addition of an amino acid to the nucleotide precursor UDP-N-acetylmuramoyl-L-alanyl-D-glutamate (UMAG) in the biosynthesis of bacterial cell-wall peptidoglycan.</text>
</comment>
<comment type="pathway">
    <text evidence="1">Cell wall biogenesis; peptidoglycan biosynthesis.</text>
</comment>
<comment type="subcellular location">
    <subcellularLocation>
        <location evidence="1">Cytoplasm</location>
    </subcellularLocation>
</comment>
<comment type="PTM">
    <text evidence="1">Carboxylation is probably crucial for Mg(2+) binding and, consequently, for the gamma-phosphate positioning of ATP.</text>
</comment>
<comment type="similarity">
    <text evidence="1">Belongs to the MurCDEF family. MurE subfamily.</text>
</comment>
<organism>
    <name type="scientific">Borrelia garinii subsp. bavariensis (strain ATCC BAA-2496 / DSM 23469 / PBi)</name>
    <name type="common">Borreliella bavariensis</name>
    <dbReference type="NCBI Taxonomy" id="290434"/>
    <lineage>
        <taxon>Bacteria</taxon>
        <taxon>Pseudomonadati</taxon>
        <taxon>Spirochaetota</taxon>
        <taxon>Spirochaetia</taxon>
        <taxon>Spirochaetales</taxon>
        <taxon>Borreliaceae</taxon>
        <taxon>Borreliella</taxon>
    </lineage>
</organism>
<dbReference type="EC" id="6.3.2.-" evidence="1"/>
<dbReference type="EMBL" id="CP000013">
    <property type="protein sequence ID" value="AAU07058.1"/>
    <property type="molecule type" value="Genomic_DNA"/>
</dbReference>
<dbReference type="RefSeq" id="WP_011193546.1">
    <property type="nucleotide sequence ID" value="NC_006156.1"/>
</dbReference>
<dbReference type="SMR" id="Q662G3"/>
<dbReference type="GeneID" id="45160992"/>
<dbReference type="KEGG" id="bga:BG0200"/>
<dbReference type="eggNOG" id="COG0769">
    <property type="taxonomic scope" value="Bacteria"/>
</dbReference>
<dbReference type="HOGENOM" id="CLU_022291_4_1_12"/>
<dbReference type="OrthoDB" id="9800958at2"/>
<dbReference type="UniPathway" id="UPA00219"/>
<dbReference type="Proteomes" id="UP000002276">
    <property type="component" value="Chromosome"/>
</dbReference>
<dbReference type="GO" id="GO:0005737">
    <property type="term" value="C:cytoplasm"/>
    <property type="evidence" value="ECO:0007669"/>
    <property type="project" value="UniProtKB-SubCell"/>
</dbReference>
<dbReference type="GO" id="GO:0016881">
    <property type="term" value="F:acid-amino acid ligase activity"/>
    <property type="evidence" value="ECO:0007669"/>
    <property type="project" value="UniProtKB-UniRule"/>
</dbReference>
<dbReference type="GO" id="GO:0005524">
    <property type="term" value="F:ATP binding"/>
    <property type="evidence" value="ECO:0007669"/>
    <property type="project" value="UniProtKB-UniRule"/>
</dbReference>
<dbReference type="GO" id="GO:0000287">
    <property type="term" value="F:magnesium ion binding"/>
    <property type="evidence" value="ECO:0007669"/>
    <property type="project" value="UniProtKB-UniRule"/>
</dbReference>
<dbReference type="GO" id="GO:0051301">
    <property type="term" value="P:cell division"/>
    <property type="evidence" value="ECO:0007669"/>
    <property type="project" value="UniProtKB-KW"/>
</dbReference>
<dbReference type="GO" id="GO:0071555">
    <property type="term" value="P:cell wall organization"/>
    <property type="evidence" value="ECO:0007669"/>
    <property type="project" value="UniProtKB-KW"/>
</dbReference>
<dbReference type="GO" id="GO:0009252">
    <property type="term" value="P:peptidoglycan biosynthetic process"/>
    <property type="evidence" value="ECO:0007669"/>
    <property type="project" value="UniProtKB-UniRule"/>
</dbReference>
<dbReference type="GO" id="GO:0008360">
    <property type="term" value="P:regulation of cell shape"/>
    <property type="evidence" value="ECO:0007669"/>
    <property type="project" value="UniProtKB-KW"/>
</dbReference>
<dbReference type="Gene3D" id="3.90.190.20">
    <property type="entry name" value="Mur ligase, C-terminal domain"/>
    <property type="match status" value="1"/>
</dbReference>
<dbReference type="Gene3D" id="3.40.1190.10">
    <property type="entry name" value="Mur-like, catalytic domain"/>
    <property type="match status" value="1"/>
</dbReference>
<dbReference type="Gene3D" id="3.40.1390.10">
    <property type="entry name" value="MurE/MurF, N-terminal domain"/>
    <property type="match status" value="1"/>
</dbReference>
<dbReference type="HAMAP" id="MF_00208">
    <property type="entry name" value="MurE"/>
    <property type="match status" value="1"/>
</dbReference>
<dbReference type="InterPro" id="IPR036565">
    <property type="entry name" value="Mur-like_cat_sf"/>
</dbReference>
<dbReference type="InterPro" id="IPR004101">
    <property type="entry name" value="Mur_ligase_C"/>
</dbReference>
<dbReference type="InterPro" id="IPR036615">
    <property type="entry name" value="Mur_ligase_C_dom_sf"/>
</dbReference>
<dbReference type="InterPro" id="IPR013221">
    <property type="entry name" value="Mur_ligase_cen"/>
</dbReference>
<dbReference type="InterPro" id="IPR000713">
    <property type="entry name" value="Mur_ligase_N"/>
</dbReference>
<dbReference type="InterPro" id="IPR035911">
    <property type="entry name" value="MurE/MurF_N"/>
</dbReference>
<dbReference type="InterPro" id="IPR005761">
    <property type="entry name" value="UDP-N-AcMur-Glu-dNH2Pim_ligase"/>
</dbReference>
<dbReference type="NCBIfam" id="TIGR01085">
    <property type="entry name" value="murE"/>
    <property type="match status" value="1"/>
</dbReference>
<dbReference type="NCBIfam" id="NF001126">
    <property type="entry name" value="PRK00139.1-4"/>
    <property type="match status" value="1"/>
</dbReference>
<dbReference type="PANTHER" id="PTHR23135">
    <property type="entry name" value="MUR LIGASE FAMILY MEMBER"/>
    <property type="match status" value="1"/>
</dbReference>
<dbReference type="PANTHER" id="PTHR23135:SF4">
    <property type="entry name" value="UDP-N-ACETYLMURAMOYL-L-ALANYL-D-GLUTAMATE--2,6-DIAMINOPIMELATE LIGASE MURE HOMOLOG, CHLOROPLASTIC"/>
    <property type="match status" value="1"/>
</dbReference>
<dbReference type="Pfam" id="PF01225">
    <property type="entry name" value="Mur_ligase"/>
    <property type="match status" value="1"/>
</dbReference>
<dbReference type="Pfam" id="PF02875">
    <property type="entry name" value="Mur_ligase_C"/>
    <property type="match status" value="1"/>
</dbReference>
<dbReference type="Pfam" id="PF08245">
    <property type="entry name" value="Mur_ligase_M"/>
    <property type="match status" value="1"/>
</dbReference>
<dbReference type="SUPFAM" id="SSF53623">
    <property type="entry name" value="MurD-like peptide ligases, catalytic domain"/>
    <property type="match status" value="1"/>
</dbReference>
<dbReference type="SUPFAM" id="SSF53244">
    <property type="entry name" value="MurD-like peptide ligases, peptide-binding domain"/>
    <property type="match status" value="1"/>
</dbReference>
<dbReference type="SUPFAM" id="SSF63418">
    <property type="entry name" value="MurE/MurF N-terminal domain"/>
    <property type="match status" value="1"/>
</dbReference>
<keyword id="KW-0067">ATP-binding</keyword>
<keyword id="KW-0131">Cell cycle</keyword>
<keyword id="KW-0132">Cell division</keyword>
<keyword id="KW-0133">Cell shape</keyword>
<keyword id="KW-0961">Cell wall biogenesis/degradation</keyword>
<keyword id="KW-0963">Cytoplasm</keyword>
<keyword id="KW-0436">Ligase</keyword>
<keyword id="KW-0547">Nucleotide-binding</keyword>
<keyword id="KW-0573">Peptidoglycan synthesis</keyword>
<evidence type="ECO:0000255" key="1">
    <source>
        <dbReference type="HAMAP-Rule" id="MF_00208"/>
    </source>
</evidence>
<protein>
    <recommendedName>
        <fullName evidence="1">UDP-N-acetylmuramyl-tripeptide synthetase</fullName>
        <ecNumber evidence="1">6.3.2.-</ecNumber>
    </recommendedName>
    <alternativeName>
        <fullName evidence="1">UDP-MurNAc-tripeptide synthetase</fullName>
    </alternativeName>
</protein>
<proteinExistence type="inferred from homology"/>
<sequence>MNKKLKDVLLKLDQDLIKHVKGSLDLEISGVTYSSKLVLPRYVFFALPGIRFDGHDFIETAIQKGSNVIVCSRDMDFYSPNVTYIKVDDFNIRKFMSNFSNIFYDEPSKKLKVIGVTGTDGKSSVCYYIYLLLKKKGVKVGFISTVFFDDGNGSLIKNPYRQSTPESTEIHLFLSNMVKNNVQYAILESTSHGLDLKTARLIDVNYFAVVFTNIGHEHLEFHGTIQNYLNAKLGLFRSVSDDAGFGVINFDDPYYSDFKNAVKKSFTYSLKSSKADFFVSFIDEKIDSTRFEFYHKGVKYFANVSLLGSFNVENIMAALILVSQILNSDIQDIVDKLICIKSLDGRMDSVNLGQNFSVIIDYAHTPGAFSKLFPIFKRFATNRLISVFGSAGERDVAKRFLQGQIADIYSDLIVLCDEDPRGENSMYIIKDIAKGIVNKVVNQDLFFIPDRRLAIEKAISLARAGDLVVALGKGHENSIIYKNKELFWNEQEAVKNAILSLEESEKDR</sequence>